<dbReference type="EC" id="1.17.7.4" evidence="1"/>
<dbReference type="EMBL" id="CP001146">
    <property type="protein sequence ID" value="ACI18737.1"/>
    <property type="molecule type" value="Genomic_DNA"/>
</dbReference>
<dbReference type="RefSeq" id="WP_012547369.1">
    <property type="nucleotide sequence ID" value="NC_011297.1"/>
</dbReference>
<dbReference type="SMR" id="B5YEC2"/>
<dbReference type="STRING" id="309799.DICTH_1030"/>
<dbReference type="PaxDb" id="309799-DICTH_1030"/>
<dbReference type="KEGG" id="dth:DICTH_1030"/>
<dbReference type="eggNOG" id="COG0761">
    <property type="taxonomic scope" value="Bacteria"/>
</dbReference>
<dbReference type="HOGENOM" id="CLU_027486_0_1_0"/>
<dbReference type="OrthoDB" id="9804077at2"/>
<dbReference type="UniPathway" id="UPA00056">
    <property type="reaction ID" value="UER00097"/>
</dbReference>
<dbReference type="UniPathway" id="UPA00059">
    <property type="reaction ID" value="UER00105"/>
</dbReference>
<dbReference type="Proteomes" id="UP000001733">
    <property type="component" value="Chromosome"/>
</dbReference>
<dbReference type="GO" id="GO:0051539">
    <property type="term" value="F:4 iron, 4 sulfur cluster binding"/>
    <property type="evidence" value="ECO:0007669"/>
    <property type="project" value="UniProtKB-UniRule"/>
</dbReference>
<dbReference type="GO" id="GO:0051745">
    <property type="term" value="F:4-hydroxy-3-methylbut-2-enyl diphosphate reductase activity"/>
    <property type="evidence" value="ECO:0007669"/>
    <property type="project" value="UniProtKB-UniRule"/>
</dbReference>
<dbReference type="GO" id="GO:0046872">
    <property type="term" value="F:metal ion binding"/>
    <property type="evidence" value="ECO:0007669"/>
    <property type="project" value="UniProtKB-KW"/>
</dbReference>
<dbReference type="GO" id="GO:0050992">
    <property type="term" value="P:dimethylallyl diphosphate biosynthetic process"/>
    <property type="evidence" value="ECO:0007669"/>
    <property type="project" value="UniProtKB-UniRule"/>
</dbReference>
<dbReference type="GO" id="GO:0019288">
    <property type="term" value="P:isopentenyl diphosphate biosynthetic process, methylerythritol 4-phosphate pathway"/>
    <property type="evidence" value="ECO:0007669"/>
    <property type="project" value="UniProtKB-UniRule"/>
</dbReference>
<dbReference type="GO" id="GO:0016114">
    <property type="term" value="P:terpenoid biosynthetic process"/>
    <property type="evidence" value="ECO:0007669"/>
    <property type="project" value="UniProtKB-UniRule"/>
</dbReference>
<dbReference type="CDD" id="cd13944">
    <property type="entry name" value="lytB_ispH"/>
    <property type="match status" value="1"/>
</dbReference>
<dbReference type="Gene3D" id="3.40.50.11270">
    <property type="match status" value="1"/>
</dbReference>
<dbReference type="Gene3D" id="3.40.1010.20">
    <property type="entry name" value="4-hydroxy-3-methylbut-2-enyl diphosphate reductase, catalytic domain"/>
    <property type="match status" value="2"/>
</dbReference>
<dbReference type="HAMAP" id="MF_00191">
    <property type="entry name" value="IspH"/>
    <property type="match status" value="1"/>
</dbReference>
<dbReference type="InterPro" id="IPR003451">
    <property type="entry name" value="LytB/IspH"/>
</dbReference>
<dbReference type="NCBIfam" id="TIGR00216">
    <property type="entry name" value="ispH_lytB"/>
    <property type="match status" value="1"/>
</dbReference>
<dbReference type="PANTHER" id="PTHR30426">
    <property type="entry name" value="4-HYDROXY-3-METHYLBUT-2-ENYL DIPHOSPHATE REDUCTASE"/>
    <property type="match status" value="1"/>
</dbReference>
<dbReference type="PANTHER" id="PTHR30426:SF0">
    <property type="entry name" value="4-HYDROXY-3-METHYLBUT-2-ENYL DIPHOSPHATE REDUCTASE"/>
    <property type="match status" value="1"/>
</dbReference>
<dbReference type="Pfam" id="PF02401">
    <property type="entry name" value="LYTB"/>
    <property type="match status" value="1"/>
</dbReference>
<dbReference type="SUPFAM" id="SSF53800">
    <property type="entry name" value="Chelatase"/>
    <property type="match status" value="1"/>
</dbReference>
<gene>
    <name evidence="1" type="primary">ispH</name>
    <name type="ordered locus">DICTH_1030</name>
</gene>
<sequence length="283" mass="32006">MILYIATPYGFCSGVKKSISLAEKVLSNEGEVYTLGALVHNPKVIEELSKKGIKILEKNGFVEGKALIVRAHGLPQRDIEFYRTLGNRVYDATCPLVKKVQILAEYLNKNKYKVVIIGEKNHPEVIGILSYTDDQGIVVENEDDIKKIENYPKIGIVFQTTQSLDNALQKVNLIMEKGKEIRIFNTICPETIERQEKAKKLSEMVDLALVLGGKNSANTRRLYITLSKKIPTYHIENIEEIDKSWFKEDNKVGIITGTSTPNDFVEEVVELLKSLYPLEIHLV</sequence>
<proteinExistence type="inferred from homology"/>
<protein>
    <recommendedName>
        <fullName evidence="1">4-hydroxy-3-methylbut-2-enyl diphosphate reductase</fullName>
        <shortName evidence="1">HMBPP reductase</shortName>
        <ecNumber evidence="1">1.17.7.4</ecNumber>
    </recommendedName>
</protein>
<keyword id="KW-0004">4Fe-4S</keyword>
<keyword id="KW-0408">Iron</keyword>
<keyword id="KW-0411">Iron-sulfur</keyword>
<keyword id="KW-0414">Isoprene biosynthesis</keyword>
<keyword id="KW-0479">Metal-binding</keyword>
<keyword id="KW-0560">Oxidoreductase</keyword>
<organism>
    <name type="scientific">Dictyoglomus thermophilum (strain ATCC 35947 / DSM 3960 / H-6-12)</name>
    <dbReference type="NCBI Taxonomy" id="309799"/>
    <lineage>
        <taxon>Bacteria</taxon>
        <taxon>Pseudomonadati</taxon>
        <taxon>Dictyoglomota</taxon>
        <taxon>Dictyoglomia</taxon>
        <taxon>Dictyoglomales</taxon>
        <taxon>Dictyoglomaceae</taxon>
        <taxon>Dictyoglomus</taxon>
    </lineage>
</organism>
<feature type="chain" id="PRO_1000098943" description="4-hydroxy-3-methylbut-2-enyl diphosphate reductase">
    <location>
        <begin position="1"/>
        <end position="283"/>
    </location>
</feature>
<feature type="active site" description="Proton donor" evidence="1">
    <location>
        <position position="124"/>
    </location>
</feature>
<feature type="binding site" evidence="1">
    <location>
        <position position="12"/>
    </location>
    <ligand>
        <name>[4Fe-4S] cluster</name>
        <dbReference type="ChEBI" id="CHEBI:49883"/>
    </ligand>
</feature>
<feature type="binding site" evidence="1">
    <location>
        <position position="40"/>
    </location>
    <ligand>
        <name>(2E)-4-hydroxy-3-methylbut-2-enyl diphosphate</name>
        <dbReference type="ChEBI" id="CHEBI:128753"/>
    </ligand>
</feature>
<feature type="binding site" evidence="1">
    <location>
        <position position="40"/>
    </location>
    <ligand>
        <name>dimethylallyl diphosphate</name>
        <dbReference type="ChEBI" id="CHEBI:57623"/>
    </ligand>
</feature>
<feature type="binding site" evidence="1">
    <location>
        <position position="40"/>
    </location>
    <ligand>
        <name>isopentenyl diphosphate</name>
        <dbReference type="ChEBI" id="CHEBI:128769"/>
    </ligand>
</feature>
<feature type="binding site" evidence="1">
    <location>
        <position position="72"/>
    </location>
    <ligand>
        <name>(2E)-4-hydroxy-3-methylbut-2-enyl diphosphate</name>
        <dbReference type="ChEBI" id="CHEBI:128753"/>
    </ligand>
</feature>
<feature type="binding site" evidence="1">
    <location>
        <position position="72"/>
    </location>
    <ligand>
        <name>dimethylallyl diphosphate</name>
        <dbReference type="ChEBI" id="CHEBI:57623"/>
    </ligand>
</feature>
<feature type="binding site" evidence="1">
    <location>
        <position position="72"/>
    </location>
    <ligand>
        <name>isopentenyl diphosphate</name>
        <dbReference type="ChEBI" id="CHEBI:128769"/>
    </ligand>
</feature>
<feature type="binding site" evidence="1">
    <location>
        <position position="94"/>
    </location>
    <ligand>
        <name>[4Fe-4S] cluster</name>
        <dbReference type="ChEBI" id="CHEBI:49883"/>
    </ligand>
</feature>
<feature type="binding site" evidence="1">
    <location>
        <position position="122"/>
    </location>
    <ligand>
        <name>(2E)-4-hydroxy-3-methylbut-2-enyl diphosphate</name>
        <dbReference type="ChEBI" id="CHEBI:128753"/>
    </ligand>
</feature>
<feature type="binding site" evidence="1">
    <location>
        <position position="122"/>
    </location>
    <ligand>
        <name>dimethylallyl diphosphate</name>
        <dbReference type="ChEBI" id="CHEBI:57623"/>
    </ligand>
</feature>
<feature type="binding site" evidence="1">
    <location>
        <position position="122"/>
    </location>
    <ligand>
        <name>isopentenyl diphosphate</name>
        <dbReference type="ChEBI" id="CHEBI:128769"/>
    </ligand>
</feature>
<feature type="binding site" evidence="1">
    <location>
        <position position="160"/>
    </location>
    <ligand>
        <name>(2E)-4-hydroxy-3-methylbut-2-enyl diphosphate</name>
        <dbReference type="ChEBI" id="CHEBI:128753"/>
    </ligand>
</feature>
<feature type="binding site" evidence="1">
    <location>
        <position position="188"/>
    </location>
    <ligand>
        <name>[4Fe-4S] cluster</name>
        <dbReference type="ChEBI" id="CHEBI:49883"/>
    </ligand>
</feature>
<feature type="binding site" evidence="1">
    <location>
        <position position="216"/>
    </location>
    <ligand>
        <name>(2E)-4-hydroxy-3-methylbut-2-enyl diphosphate</name>
        <dbReference type="ChEBI" id="CHEBI:128753"/>
    </ligand>
</feature>
<feature type="binding site" evidence="1">
    <location>
        <position position="216"/>
    </location>
    <ligand>
        <name>dimethylallyl diphosphate</name>
        <dbReference type="ChEBI" id="CHEBI:57623"/>
    </ligand>
</feature>
<feature type="binding site" evidence="1">
    <location>
        <position position="216"/>
    </location>
    <ligand>
        <name>isopentenyl diphosphate</name>
        <dbReference type="ChEBI" id="CHEBI:128769"/>
    </ligand>
</feature>
<feature type="binding site" evidence="1">
    <location>
        <position position="218"/>
    </location>
    <ligand>
        <name>(2E)-4-hydroxy-3-methylbut-2-enyl diphosphate</name>
        <dbReference type="ChEBI" id="CHEBI:128753"/>
    </ligand>
</feature>
<feature type="binding site" evidence="1">
    <location>
        <position position="218"/>
    </location>
    <ligand>
        <name>dimethylallyl diphosphate</name>
        <dbReference type="ChEBI" id="CHEBI:57623"/>
    </ligand>
</feature>
<feature type="binding site" evidence="1">
    <location>
        <position position="218"/>
    </location>
    <ligand>
        <name>isopentenyl diphosphate</name>
        <dbReference type="ChEBI" id="CHEBI:128769"/>
    </ligand>
</feature>
<feature type="binding site" evidence="1">
    <location>
        <position position="259"/>
    </location>
    <ligand>
        <name>(2E)-4-hydroxy-3-methylbut-2-enyl diphosphate</name>
        <dbReference type="ChEBI" id="CHEBI:128753"/>
    </ligand>
</feature>
<feature type="binding site" evidence="1">
    <location>
        <position position="259"/>
    </location>
    <ligand>
        <name>dimethylallyl diphosphate</name>
        <dbReference type="ChEBI" id="CHEBI:57623"/>
    </ligand>
</feature>
<feature type="binding site" evidence="1">
    <location>
        <position position="259"/>
    </location>
    <ligand>
        <name>isopentenyl diphosphate</name>
        <dbReference type="ChEBI" id="CHEBI:128769"/>
    </ligand>
</feature>
<evidence type="ECO:0000255" key="1">
    <source>
        <dbReference type="HAMAP-Rule" id="MF_00191"/>
    </source>
</evidence>
<name>ISPH_DICT6</name>
<comment type="function">
    <text evidence="1">Catalyzes the conversion of 1-hydroxy-2-methyl-2-(E)-butenyl 4-diphosphate (HMBPP) into a mixture of isopentenyl diphosphate (IPP) and dimethylallyl diphosphate (DMAPP). Acts in the terminal step of the DOXP/MEP pathway for isoprenoid precursor biosynthesis.</text>
</comment>
<comment type="catalytic activity">
    <reaction evidence="1">
        <text>isopentenyl diphosphate + 2 oxidized [2Fe-2S]-[ferredoxin] + H2O = (2E)-4-hydroxy-3-methylbut-2-enyl diphosphate + 2 reduced [2Fe-2S]-[ferredoxin] + 2 H(+)</text>
        <dbReference type="Rhea" id="RHEA:24488"/>
        <dbReference type="Rhea" id="RHEA-COMP:10000"/>
        <dbReference type="Rhea" id="RHEA-COMP:10001"/>
        <dbReference type="ChEBI" id="CHEBI:15377"/>
        <dbReference type="ChEBI" id="CHEBI:15378"/>
        <dbReference type="ChEBI" id="CHEBI:33737"/>
        <dbReference type="ChEBI" id="CHEBI:33738"/>
        <dbReference type="ChEBI" id="CHEBI:128753"/>
        <dbReference type="ChEBI" id="CHEBI:128769"/>
        <dbReference type="EC" id="1.17.7.4"/>
    </reaction>
</comment>
<comment type="catalytic activity">
    <reaction evidence="1">
        <text>dimethylallyl diphosphate + 2 oxidized [2Fe-2S]-[ferredoxin] + H2O = (2E)-4-hydroxy-3-methylbut-2-enyl diphosphate + 2 reduced [2Fe-2S]-[ferredoxin] + 2 H(+)</text>
        <dbReference type="Rhea" id="RHEA:24825"/>
        <dbReference type="Rhea" id="RHEA-COMP:10000"/>
        <dbReference type="Rhea" id="RHEA-COMP:10001"/>
        <dbReference type="ChEBI" id="CHEBI:15377"/>
        <dbReference type="ChEBI" id="CHEBI:15378"/>
        <dbReference type="ChEBI" id="CHEBI:33737"/>
        <dbReference type="ChEBI" id="CHEBI:33738"/>
        <dbReference type="ChEBI" id="CHEBI:57623"/>
        <dbReference type="ChEBI" id="CHEBI:128753"/>
        <dbReference type="EC" id="1.17.7.4"/>
    </reaction>
</comment>
<comment type="cofactor">
    <cofactor evidence="1">
        <name>[4Fe-4S] cluster</name>
        <dbReference type="ChEBI" id="CHEBI:49883"/>
    </cofactor>
    <text evidence="1">Binds 1 [4Fe-4S] cluster per subunit.</text>
</comment>
<comment type="pathway">
    <text evidence="1">Isoprenoid biosynthesis; dimethylallyl diphosphate biosynthesis; dimethylallyl diphosphate from (2E)-4-hydroxy-3-methylbutenyl diphosphate: step 1/1.</text>
</comment>
<comment type="pathway">
    <text evidence="1">Isoprenoid biosynthesis; isopentenyl diphosphate biosynthesis via DXP pathway; isopentenyl diphosphate from 1-deoxy-D-xylulose 5-phosphate: step 6/6.</text>
</comment>
<comment type="similarity">
    <text evidence="1">Belongs to the IspH family.</text>
</comment>
<reference key="1">
    <citation type="journal article" date="2014" name="Genome Announc.">
        <title>Complete Genome Sequence of the Extreme Thermophile Dictyoglomus thermophilum H-6-12.</title>
        <authorList>
            <person name="Coil D.A."/>
            <person name="Badger J.H."/>
            <person name="Forberger H.C."/>
            <person name="Riggs F."/>
            <person name="Madupu R."/>
            <person name="Fedorova N."/>
            <person name="Ward N."/>
            <person name="Robb F.T."/>
            <person name="Eisen J.A."/>
        </authorList>
    </citation>
    <scope>NUCLEOTIDE SEQUENCE [LARGE SCALE GENOMIC DNA]</scope>
    <source>
        <strain>ATCC 35947 / DSM 3960 / H-6-12</strain>
    </source>
</reference>
<accession>B5YEC2</accession>